<gene>
    <name evidence="1" type="primary">xerS</name>
    <name type="ordered locus">LL1232</name>
    <name type="ORF">L57903</name>
</gene>
<sequence>MKREQLIQNIEKLKHIMPSYVLEYYQSKLTIPYSLNTLYEYLKEYERFFSWLVDSGVADVDKITDVSLSVLENLTKRDLESFILYLRERPRLNTRSTRYGVSQTTINRTLSALSSLYKYLTEEVENEDGEPYFYRNVMKKVQTKKKSETLASRAENIKGKLFLGDETQGFLDYIDNEYEKTLSNRARSSFFKNKERDLAIIALILASGIRLSEAVNVDLRDLNLITMVVEVTRKGGKRDAVPYAPFAKTYFERYLEVRSQRYKTTAKDTAFFVTLYRDVPSRIDPSSVEKLVAKYSQAFKVRVTPHKLRHTLATRLYAQTNSQVLVSNQLGHASTQVTDLYTHIINEEQKNALDNL</sequence>
<reference key="1">
    <citation type="journal article" date="2001" name="Genome Res.">
        <title>The complete genome sequence of the lactic acid bacterium Lactococcus lactis ssp. lactis IL1403.</title>
        <authorList>
            <person name="Bolotin A."/>
            <person name="Wincker P."/>
            <person name="Mauger S."/>
            <person name="Jaillon O."/>
            <person name="Malarme K."/>
            <person name="Weissenbach J."/>
            <person name="Ehrlich S.D."/>
            <person name="Sorokin A."/>
        </authorList>
    </citation>
    <scope>NUCLEOTIDE SEQUENCE [LARGE SCALE GENOMIC DNA]</scope>
    <source>
        <strain>IL1403</strain>
    </source>
</reference>
<name>XERS_LACLA</name>
<keyword id="KW-0131">Cell cycle</keyword>
<keyword id="KW-0132">Cell division</keyword>
<keyword id="KW-0159">Chromosome partition</keyword>
<keyword id="KW-0963">Cytoplasm</keyword>
<keyword id="KW-0229">DNA integration</keyword>
<keyword id="KW-0233">DNA recombination</keyword>
<keyword id="KW-0238">DNA-binding</keyword>
<keyword id="KW-1185">Reference proteome</keyword>
<dbReference type="EMBL" id="AE005176">
    <property type="protein sequence ID" value="AAK05330.1"/>
    <property type="molecule type" value="Genomic_DNA"/>
</dbReference>
<dbReference type="PIR" id="H86778">
    <property type="entry name" value="H86778"/>
</dbReference>
<dbReference type="RefSeq" id="NP_267388.1">
    <property type="nucleotide sequence ID" value="NC_002662.1"/>
</dbReference>
<dbReference type="RefSeq" id="WP_003131037.1">
    <property type="nucleotide sequence ID" value="NC_002662.1"/>
</dbReference>
<dbReference type="SMR" id="Q9CG78"/>
<dbReference type="PaxDb" id="272623-L57903"/>
<dbReference type="EnsemblBacteria" id="AAK05330">
    <property type="protein sequence ID" value="AAK05330"/>
    <property type="gene ID" value="L57903"/>
</dbReference>
<dbReference type="GeneID" id="89633401"/>
<dbReference type="KEGG" id="lla:L57903"/>
<dbReference type="PATRIC" id="fig|272623.7.peg.1334"/>
<dbReference type="eggNOG" id="COG4974">
    <property type="taxonomic scope" value="Bacteria"/>
</dbReference>
<dbReference type="HOGENOM" id="CLU_027562_9_6_9"/>
<dbReference type="OrthoDB" id="283809at2"/>
<dbReference type="Proteomes" id="UP000002196">
    <property type="component" value="Chromosome"/>
</dbReference>
<dbReference type="GO" id="GO:0005737">
    <property type="term" value="C:cytoplasm"/>
    <property type="evidence" value="ECO:0007669"/>
    <property type="project" value="UniProtKB-SubCell"/>
</dbReference>
<dbReference type="GO" id="GO:0003677">
    <property type="term" value="F:DNA binding"/>
    <property type="evidence" value="ECO:0007669"/>
    <property type="project" value="UniProtKB-KW"/>
</dbReference>
<dbReference type="GO" id="GO:0009037">
    <property type="term" value="F:tyrosine-based site-specific recombinase activity"/>
    <property type="evidence" value="ECO:0007669"/>
    <property type="project" value="UniProtKB-UniRule"/>
</dbReference>
<dbReference type="GO" id="GO:0051301">
    <property type="term" value="P:cell division"/>
    <property type="evidence" value="ECO:0007669"/>
    <property type="project" value="UniProtKB-KW"/>
</dbReference>
<dbReference type="GO" id="GO:0007059">
    <property type="term" value="P:chromosome segregation"/>
    <property type="evidence" value="ECO:0007669"/>
    <property type="project" value="UniProtKB-UniRule"/>
</dbReference>
<dbReference type="GO" id="GO:0006310">
    <property type="term" value="P:DNA recombination"/>
    <property type="evidence" value="ECO:0007669"/>
    <property type="project" value="UniProtKB-UniRule"/>
</dbReference>
<dbReference type="FunFam" id="1.10.443.10:FF:000010">
    <property type="entry name" value="Tyrosine recombinase XerS"/>
    <property type="match status" value="1"/>
</dbReference>
<dbReference type="Gene3D" id="1.10.150.130">
    <property type="match status" value="1"/>
</dbReference>
<dbReference type="Gene3D" id="1.10.443.10">
    <property type="entry name" value="Intergrase catalytic core"/>
    <property type="match status" value="1"/>
</dbReference>
<dbReference type="HAMAP" id="MF_01816">
    <property type="entry name" value="Recomb_XerS"/>
    <property type="match status" value="1"/>
</dbReference>
<dbReference type="InterPro" id="IPR044068">
    <property type="entry name" value="CB"/>
</dbReference>
<dbReference type="InterPro" id="IPR011010">
    <property type="entry name" value="DNA_brk_join_enz"/>
</dbReference>
<dbReference type="InterPro" id="IPR013762">
    <property type="entry name" value="Integrase-like_cat_sf"/>
</dbReference>
<dbReference type="InterPro" id="IPR002104">
    <property type="entry name" value="Integrase_catalytic"/>
</dbReference>
<dbReference type="InterPro" id="IPR010998">
    <property type="entry name" value="Integrase_recombinase_N"/>
</dbReference>
<dbReference type="InterPro" id="IPR004107">
    <property type="entry name" value="Integrase_SAM-like_N"/>
</dbReference>
<dbReference type="InterPro" id="IPR023670">
    <property type="entry name" value="Recomb_XerS"/>
</dbReference>
<dbReference type="InterPro" id="IPR050090">
    <property type="entry name" value="Tyrosine_recombinase_XerCD"/>
</dbReference>
<dbReference type="NCBIfam" id="NF003462">
    <property type="entry name" value="PRK05084.1"/>
    <property type="match status" value="1"/>
</dbReference>
<dbReference type="PANTHER" id="PTHR30349">
    <property type="entry name" value="PHAGE INTEGRASE-RELATED"/>
    <property type="match status" value="1"/>
</dbReference>
<dbReference type="PANTHER" id="PTHR30349:SF77">
    <property type="entry name" value="TYROSINE RECOMBINASE XERC"/>
    <property type="match status" value="1"/>
</dbReference>
<dbReference type="Pfam" id="PF02899">
    <property type="entry name" value="Phage_int_SAM_1"/>
    <property type="match status" value="1"/>
</dbReference>
<dbReference type="Pfam" id="PF00589">
    <property type="entry name" value="Phage_integrase"/>
    <property type="match status" value="1"/>
</dbReference>
<dbReference type="SUPFAM" id="SSF56349">
    <property type="entry name" value="DNA breaking-rejoining enzymes"/>
    <property type="match status" value="1"/>
</dbReference>
<dbReference type="PROSITE" id="PS51900">
    <property type="entry name" value="CB"/>
    <property type="match status" value="1"/>
</dbReference>
<dbReference type="PROSITE" id="PS51898">
    <property type="entry name" value="TYR_RECOMBINASE"/>
    <property type="match status" value="1"/>
</dbReference>
<evidence type="ECO:0000255" key="1">
    <source>
        <dbReference type="HAMAP-Rule" id="MF_01816"/>
    </source>
</evidence>
<evidence type="ECO:0000255" key="2">
    <source>
        <dbReference type="PROSITE-ProRule" id="PRU01246"/>
    </source>
</evidence>
<evidence type="ECO:0000255" key="3">
    <source>
        <dbReference type="PROSITE-ProRule" id="PRU01248"/>
    </source>
</evidence>
<feature type="chain" id="PRO_0000095359" description="Tyrosine recombinase XerS">
    <location>
        <begin position="1"/>
        <end position="356"/>
    </location>
</feature>
<feature type="domain" description="Core-binding (CB)" evidence="3">
    <location>
        <begin position="16"/>
        <end position="121"/>
    </location>
</feature>
<feature type="domain" description="Tyr recombinase" evidence="2">
    <location>
        <begin position="169"/>
        <end position="354"/>
    </location>
</feature>
<feature type="active site" evidence="1">
    <location>
        <position position="210"/>
    </location>
</feature>
<feature type="active site" evidence="1">
    <location>
        <position position="234"/>
    </location>
</feature>
<feature type="active site" evidence="1">
    <location>
        <position position="306"/>
    </location>
</feature>
<feature type="active site" evidence="1">
    <location>
        <position position="309"/>
    </location>
</feature>
<feature type="active site" evidence="1">
    <location>
        <position position="332"/>
    </location>
</feature>
<feature type="active site" description="O-(3'-phospho-DNA)-tyrosine intermediate" evidence="1">
    <location>
        <position position="341"/>
    </location>
</feature>
<comment type="function">
    <text evidence="1">Site-specific tyrosine recombinase, which acts by catalyzing the cutting and rejoining of the recombining DNA molecules. Essential to convert dimers of the bacterial chromosome into monomers to permit their segregation at cell division.</text>
</comment>
<comment type="activity regulation">
    <text evidence="1">FtsK is required for recombination.</text>
</comment>
<comment type="subcellular location">
    <subcellularLocation>
        <location evidence="1">Cytoplasm</location>
    </subcellularLocation>
</comment>
<comment type="similarity">
    <text evidence="1">Belongs to the 'phage' integrase family. XerS subfamily.</text>
</comment>
<accession>Q9CG78</accession>
<protein>
    <recommendedName>
        <fullName evidence="1">Tyrosine recombinase XerS</fullName>
    </recommendedName>
</protein>
<proteinExistence type="inferred from homology"/>
<organism>
    <name type="scientific">Lactococcus lactis subsp. lactis (strain IL1403)</name>
    <name type="common">Streptococcus lactis</name>
    <dbReference type="NCBI Taxonomy" id="272623"/>
    <lineage>
        <taxon>Bacteria</taxon>
        <taxon>Bacillati</taxon>
        <taxon>Bacillota</taxon>
        <taxon>Bacilli</taxon>
        <taxon>Lactobacillales</taxon>
        <taxon>Streptococcaceae</taxon>
        <taxon>Lactococcus</taxon>
    </lineage>
</organism>